<proteinExistence type="inferred from homology"/>
<comment type="function">
    <text evidence="1">Component of the MITRAC (mitochondrial translation regulation assembly intermediate of cytochrome c oxidase complex) complex, that regulates cytochrome c oxidase assembly.</text>
</comment>
<comment type="subunit">
    <text evidence="2">Component of the MITRAC (mitochondrial translation regulation assembly intermediate of cytochrome c oxidase complex) complex, the core components of this complex being COA3/MITRAC12 and COX14.</text>
</comment>
<comment type="subcellular location">
    <subcellularLocation>
        <location evidence="2">Mitochondrion</location>
    </subcellularLocation>
    <text evidence="2">Colocalizes with MT-CO1.</text>
</comment>
<comment type="similarity">
    <text evidence="4">Belongs to the CMC family.</text>
</comment>
<gene>
    <name type="primary">CMC1</name>
</gene>
<name>COXM1_BOVIN</name>
<keyword id="KW-0007">Acetylation</keyword>
<keyword id="KW-0186">Copper</keyword>
<keyword id="KW-1015">Disulfide bond</keyword>
<keyword id="KW-0479">Metal-binding</keyword>
<keyword id="KW-0496">Mitochondrion</keyword>
<keyword id="KW-1185">Reference proteome</keyword>
<protein>
    <recommendedName>
        <fullName>COX assembly mitochondrial protein homolog</fullName>
        <shortName>Cmc1p</shortName>
    </recommendedName>
</protein>
<evidence type="ECO:0000250" key="1"/>
<evidence type="ECO:0000250" key="2">
    <source>
        <dbReference type="UniProtKB" id="Q7Z7K0"/>
    </source>
</evidence>
<evidence type="ECO:0000255" key="3">
    <source>
        <dbReference type="PROSITE-ProRule" id="PRU01150"/>
    </source>
</evidence>
<evidence type="ECO:0000305" key="4"/>
<sequence>MALDPSEQHLRHVEKDVLIPKIMREKARERCSEQVQDFTKCCKDSGVLMVVKCRKENSALKDCLTSYYKDPAFYEECKMEYLKEREEFRRTGIPTKKRLQKLPTSM</sequence>
<dbReference type="EMBL" id="BC102785">
    <property type="protein sequence ID" value="AAI02786.1"/>
    <property type="molecule type" value="mRNA"/>
</dbReference>
<dbReference type="RefSeq" id="NP_001070016.1">
    <property type="nucleotide sequence ID" value="NM_001076548.2"/>
</dbReference>
<dbReference type="FunCoup" id="Q3SZM6">
    <property type="interactions" value="745"/>
</dbReference>
<dbReference type="STRING" id="9913.ENSBTAP00000025040"/>
<dbReference type="PaxDb" id="9913-ENSBTAP00000025040"/>
<dbReference type="GeneID" id="767824"/>
<dbReference type="KEGG" id="bta:767824"/>
<dbReference type="CTD" id="152100"/>
<dbReference type="VEuPathDB" id="HostDB:ENSBTAG00000035286"/>
<dbReference type="eggNOG" id="KOG4624">
    <property type="taxonomic scope" value="Eukaryota"/>
</dbReference>
<dbReference type="HOGENOM" id="CLU_142621_1_1_1"/>
<dbReference type="InParanoid" id="Q3SZM6"/>
<dbReference type="OMA" id="CCQETGF"/>
<dbReference type="OrthoDB" id="6224010at2759"/>
<dbReference type="Reactome" id="R-BTA-9864848">
    <property type="pathway name" value="Complex IV assembly"/>
</dbReference>
<dbReference type="Proteomes" id="UP000009136">
    <property type="component" value="Chromosome 22"/>
</dbReference>
<dbReference type="Bgee" id="ENSBTAG00000035286">
    <property type="expression patterns" value="Expressed in oocyte and 106 other cell types or tissues"/>
</dbReference>
<dbReference type="GO" id="GO:0005739">
    <property type="term" value="C:mitochondrion"/>
    <property type="evidence" value="ECO:0000250"/>
    <property type="project" value="UniProtKB"/>
</dbReference>
<dbReference type="GO" id="GO:0046872">
    <property type="term" value="F:metal ion binding"/>
    <property type="evidence" value="ECO:0007669"/>
    <property type="project" value="UniProtKB-KW"/>
</dbReference>
<dbReference type="InterPro" id="IPR013892">
    <property type="entry name" value="Cyt_c_biogenesis_Cmc1-like"/>
</dbReference>
<dbReference type="PANTHER" id="PTHR22977">
    <property type="entry name" value="COX ASSEMBLY MITOCHONDRIAL PROTEIN"/>
    <property type="match status" value="1"/>
</dbReference>
<dbReference type="PANTHER" id="PTHR22977:SF5">
    <property type="entry name" value="COX ASSEMBLY MITOCHONDRIAL PROTEIN HOMOLOG"/>
    <property type="match status" value="1"/>
</dbReference>
<dbReference type="Pfam" id="PF08583">
    <property type="entry name" value="Cmc1"/>
    <property type="match status" value="1"/>
</dbReference>
<dbReference type="PROSITE" id="PS51808">
    <property type="entry name" value="CHCH"/>
    <property type="match status" value="1"/>
</dbReference>
<accession>Q3SZM6</accession>
<organism>
    <name type="scientific">Bos taurus</name>
    <name type="common">Bovine</name>
    <dbReference type="NCBI Taxonomy" id="9913"/>
    <lineage>
        <taxon>Eukaryota</taxon>
        <taxon>Metazoa</taxon>
        <taxon>Chordata</taxon>
        <taxon>Craniata</taxon>
        <taxon>Vertebrata</taxon>
        <taxon>Euteleostomi</taxon>
        <taxon>Mammalia</taxon>
        <taxon>Eutheria</taxon>
        <taxon>Laurasiatheria</taxon>
        <taxon>Artiodactyla</taxon>
        <taxon>Ruminantia</taxon>
        <taxon>Pecora</taxon>
        <taxon>Bovidae</taxon>
        <taxon>Bovinae</taxon>
        <taxon>Bos</taxon>
    </lineage>
</organism>
<reference key="1">
    <citation type="submission" date="2005-08" db="EMBL/GenBank/DDBJ databases">
        <authorList>
            <consortium name="NIH - Mammalian Gene Collection (MGC) project"/>
        </authorList>
    </citation>
    <scope>NUCLEOTIDE SEQUENCE [LARGE SCALE MRNA]</scope>
    <source>
        <strain>Crossbred X Angus</strain>
        <tissue>Ileum</tissue>
    </source>
</reference>
<feature type="initiator methionine" description="Removed" evidence="2">
    <location>
        <position position="1"/>
    </location>
</feature>
<feature type="chain" id="PRO_0000317184" description="COX assembly mitochondrial protein homolog">
    <location>
        <begin position="2"/>
        <end position="106"/>
    </location>
</feature>
<feature type="domain" description="CHCH" evidence="3">
    <location>
        <begin position="28"/>
        <end position="71"/>
    </location>
</feature>
<feature type="short sequence motif" description="Cx9C motif 1" evidence="3">
    <location>
        <begin position="31"/>
        <end position="41"/>
    </location>
</feature>
<feature type="short sequence motif" description="Cx9C motif 2" evidence="3">
    <location>
        <begin position="53"/>
        <end position="63"/>
    </location>
</feature>
<feature type="modified residue" description="N-acetylalanine" evidence="2">
    <location>
        <position position="2"/>
    </location>
</feature>
<feature type="disulfide bond" evidence="3">
    <location>
        <begin position="31"/>
        <end position="63"/>
    </location>
</feature>
<feature type="disulfide bond" evidence="3">
    <location>
        <begin position="41"/>
        <end position="53"/>
    </location>
</feature>